<name>HOA2_PSEPW</name>
<feature type="chain" id="PRO_0000387882" description="4-hydroxy-2-oxovalerate aldolase 2">
    <location>
        <begin position="1"/>
        <end position="339"/>
    </location>
</feature>
<feature type="domain" description="Pyruvate carboxyltransferase" evidence="1">
    <location>
        <begin position="8"/>
        <end position="260"/>
    </location>
</feature>
<feature type="active site" description="Proton acceptor" evidence="1">
    <location>
        <position position="20"/>
    </location>
</feature>
<feature type="binding site" evidence="1">
    <location>
        <begin position="16"/>
        <end position="17"/>
    </location>
    <ligand>
        <name>substrate</name>
    </ligand>
</feature>
<feature type="binding site" evidence="1">
    <location>
        <position position="17"/>
    </location>
    <ligand>
        <name>Mn(2+)</name>
        <dbReference type="ChEBI" id="CHEBI:29035"/>
    </ligand>
</feature>
<feature type="binding site" evidence="1">
    <location>
        <position position="170"/>
    </location>
    <ligand>
        <name>substrate</name>
    </ligand>
</feature>
<feature type="binding site" evidence="1">
    <location>
        <position position="199"/>
    </location>
    <ligand>
        <name>Mn(2+)</name>
        <dbReference type="ChEBI" id="CHEBI:29035"/>
    </ligand>
</feature>
<feature type="binding site" evidence="1">
    <location>
        <position position="199"/>
    </location>
    <ligand>
        <name>substrate</name>
    </ligand>
</feature>
<feature type="binding site" evidence="1">
    <location>
        <position position="201"/>
    </location>
    <ligand>
        <name>Mn(2+)</name>
        <dbReference type="ChEBI" id="CHEBI:29035"/>
    </ligand>
</feature>
<feature type="binding site" evidence="1">
    <location>
        <position position="290"/>
    </location>
    <ligand>
        <name>substrate</name>
    </ligand>
</feature>
<feature type="site" description="Transition state stabilizer" evidence="1">
    <location>
        <position position="16"/>
    </location>
</feature>
<organism>
    <name type="scientific">Pseudomonas putida (strain W619)</name>
    <dbReference type="NCBI Taxonomy" id="390235"/>
    <lineage>
        <taxon>Bacteria</taxon>
        <taxon>Pseudomonadati</taxon>
        <taxon>Pseudomonadota</taxon>
        <taxon>Gammaproteobacteria</taxon>
        <taxon>Pseudomonadales</taxon>
        <taxon>Pseudomonadaceae</taxon>
        <taxon>Pseudomonas</taxon>
    </lineage>
</organism>
<protein>
    <recommendedName>
        <fullName evidence="1">4-hydroxy-2-oxovalerate aldolase 2</fullName>
        <shortName evidence="1">HOA 2</shortName>
        <ecNumber evidence="1">4.1.3.39</ecNumber>
    </recommendedName>
    <alternativeName>
        <fullName evidence="1">4-hydroxy-2-keto-pentanoic acid aldolase 2</fullName>
    </alternativeName>
    <alternativeName>
        <fullName evidence="1">4-hydroxy-2-oxopentanoate aldolase 2</fullName>
    </alternativeName>
</protein>
<gene>
    <name type="ordered locus">PputW619_2007</name>
</gene>
<evidence type="ECO:0000255" key="1">
    <source>
        <dbReference type="HAMAP-Rule" id="MF_01656"/>
    </source>
</evidence>
<comment type="catalytic activity">
    <reaction evidence="1">
        <text>(S)-4-hydroxy-2-oxopentanoate = acetaldehyde + pyruvate</text>
        <dbReference type="Rhea" id="RHEA:22624"/>
        <dbReference type="ChEBI" id="CHEBI:15343"/>
        <dbReference type="ChEBI" id="CHEBI:15361"/>
        <dbReference type="ChEBI" id="CHEBI:73143"/>
        <dbReference type="EC" id="4.1.3.39"/>
    </reaction>
</comment>
<comment type="similarity">
    <text evidence="1">Belongs to the 4-hydroxy-2-oxovalerate aldolase family.</text>
</comment>
<keyword id="KW-0058">Aromatic hydrocarbons catabolism</keyword>
<keyword id="KW-0456">Lyase</keyword>
<keyword id="KW-0464">Manganese</keyword>
<keyword id="KW-0479">Metal-binding</keyword>
<proteinExistence type="inferred from homology"/>
<accession>B1J6Y1</accession>
<dbReference type="EC" id="4.1.3.39" evidence="1"/>
<dbReference type="EMBL" id="CP000949">
    <property type="protein sequence ID" value="ACA72507.1"/>
    <property type="molecule type" value="Genomic_DNA"/>
</dbReference>
<dbReference type="SMR" id="B1J6Y1"/>
<dbReference type="STRING" id="390235.PputW619_2007"/>
<dbReference type="KEGG" id="ppw:PputW619_2007"/>
<dbReference type="eggNOG" id="COG0119">
    <property type="taxonomic scope" value="Bacteria"/>
</dbReference>
<dbReference type="HOGENOM" id="CLU_049173_0_0_6"/>
<dbReference type="OrthoDB" id="9803573at2"/>
<dbReference type="GO" id="GO:0003852">
    <property type="term" value="F:2-isopropylmalate synthase activity"/>
    <property type="evidence" value="ECO:0007669"/>
    <property type="project" value="TreeGrafter"/>
</dbReference>
<dbReference type="GO" id="GO:0008701">
    <property type="term" value="F:4-hydroxy-2-oxovalerate aldolase activity"/>
    <property type="evidence" value="ECO:0007669"/>
    <property type="project" value="UniProtKB-UniRule"/>
</dbReference>
<dbReference type="GO" id="GO:0030145">
    <property type="term" value="F:manganese ion binding"/>
    <property type="evidence" value="ECO:0007669"/>
    <property type="project" value="UniProtKB-UniRule"/>
</dbReference>
<dbReference type="GO" id="GO:0009056">
    <property type="term" value="P:catabolic process"/>
    <property type="evidence" value="ECO:0007669"/>
    <property type="project" value="UniProtKB-KW"/>
</dbReference>
<dbReference type="GO" id="GO:0009098">
    <property type="term" value="P:L-leucine biosynthetic process"/>
    <property type="evidence" value="ECO:0007669"/>
    <property type="project" value="TreeGrafter"/>
</dbReference>
<dbReference type="CDD" id="cd07943">
    <property type="entry name" value="DRE_TIM_HOA"/>
    <property type="match status" value="1"/>
</dbReference>
<dbReference type="FunFam" id="1.10.8.60:FF:000042">
    <property type="entry name" value="4-hydroxy-2-oxovalerate aldolase"/>
    <property type="match status" value="1"/>
</dbReference>
<dbReference type="Gene3D" id="1.10.8.60">
    <property type="match status" value="1"/>
</dbReference>
<dbReference type="Gene3D" id="3.20.20.70">
    <property type="entry name" value="Aldolase class I"/>
    <property type="match status" value="1"/>
</dbReference>
<dbReference type="HAMAP" id="MF_01656">
    <property type="entry name" value="HOA"/>
    <property type="match status" value="1"/>
</dbReference>
<dbReference type="InterPro" id="IPR050073">
    <property type="entry name" value="2-IPM_HCS-like"/>
</dbReference>
<dbReference type="InterPro" id="IPR017629">
    <property type="entry name" value="4OH_2_O-val_aldolase"/>
</dbReference>
<dbReference type="InterPro" id="IPR013785">
    <property type="entry name" value="Aldolase_TIM"/>
</dbReference>
<dbReference type="InterPro" id="IPR012425">
    <property type="entry name" value="DmpG_comm"/>
</dbReference>
<dbReference type="InterPro" id="IPR035685">
    <property type="entry name" value="DRE_TIM_HOA"/>
</dbReference>
<dbReference type="InterPro" id="IPR000891">
    <property type="entry name" value="PYR_CT"/>
</dbReference>
<dbReference type="NCBIfam" id="TIGR03217">
    <property type="entry name" value="4OH_2_O_val_ald"/>
    <property type="match status" value="1"/>
</dbReference>
<dbReference type="NCBIfam" id="NF006049">
    <property type="entry name" value="PRK08195.1"/>
    <property type="match status" value="1"/>
</dbReference>
<dbReference type="PANTHER" id="PTHR10277:SF9">
    <property type="entry name" value="2-ISOPROPYLMALATE SYNTHASE 1, CHLOROPLASTIC-RELATED"/>
    <property type="match status" value="1"/>
</dbReference>
<dbReference type="PANTHER" id="PTHR10277">
    <property type="entry name" value="HOMOCITRATE SYNTHASE-RELATED"/>
    <property type="match status" value="1"/>
</dbReference>
<dbReference type="Pfam" id="PF07836">
    <property type="entry name" value="DmpG_comm"/>
    <property type="match status" value="1"/>
</dbReference>
<dbReference type="Pfam" id="PF00682">
    <property type="entry name" value="HMGL-like"/>
    <property type="match status" value="1"/>
</dbReference>
<dbReference type="SUPFAM" id="SSF51569">
    <property type="entry name" value="Aldolase"/>
    <property type="match status" value="1"/>
</dbReference>
<dbReference type="SUPFAM" id="SSF89000">
    <property type="entry name" value="post-HMGL domain-like"/>
    <property type="match status" value="1"/>
</dbReference>
<dbReference type="PROSITE" id="PS50991">
    <property type="entry name" value="PYR_CT"/>
    <property type="match status" value="1"/>
</dbReference>
<reference key="1">
    <citation type="submission" date="2008-02" db="EMBL/GenBank/DDBJ databases">
        <title>Complete sequence of Pseudomonas putida W619.</title>
        <authorList>
            <person name="Copeland A."/>
            <person name="Lucas S."/>
            <person name="Lapidus A."/>
            <person name="Barry K."/>
            <person name="Detter J.C."/>
            <person name="Glavina del Rio T."/>
            <person name="Dalin E."/>
            <person name="Tice H."/>
            <person name="Pitluck S."/>
            <person name="Chain P."/>
            <person name="Malfatti S."/>
            <person name="Shin M."/>
            <person name="Vergez L."/>
            <person name="Schmutz J."/>
            <person name="Larimer F."/>
            <person name="Land M."/>
            <person name="Hauser L."/>
            <person name="Kyrpides N."/>
            <person name="Kim E."/>
            <person name="Taghavi S."/>
            <person name="Vangronsveld D."/>
            <person name="van der Lelie D."/>
            <person name="Richardson P."/>
        </authorList>
    </citation>
    <scope>NUCLEOTIDE SEQUENCE [LARGE SCALE GENOMIC DNA]</scope>
    <source>
        <strain>W619</strain>
    </source>
</reference>
<sequence length="339" mass="36366">MINTNKKIHISDVTLRDGMHAVRHRYSLEQVAGIAQALDQAGVDSIEVAHGDGLQGSSFNYGFGAHTDFEWIAAVAAVVQRARIATLLLPGIGTVHDLKAAYDAGARIVRVATHCTEADVSRQHIEYARSLGMDTVGFLMMSHMQTPAGLARQGKLMESYGAQCIYVVDSGGAMNMWDIAERFKAMKDVLDPATQTGMHAHHNLSLGVANSLVALEHGCDRVDASLTGMGAGAGNAPLEVFAAAAERMGLNHGCDVKKLIDAAEDIVRPLQERVVRVDRETLALGYAGVYSSFLRHAEAAAAKYGLSTFDILVELGKRRMIGGQEDMIIDVALDLLNQG</sequence>